<proteinExistence type="inferred from homology"/>
<organism>
    <name type="scientific">Pyrococcus woesei</name>
    <dbReference type="NCBI Taxonomy" id="2262"/>
    <lineage>
        <taxon>Archaea</taxon>
        <taxon>Methanobacteriati</taxon>
        <taxon>Methanobacteriota</taxon>
        <taxon>Thermococci</taxon>
        <taxon>Thermococcales</taxon>
        <taxon>Thermococcaceae</taxon>
        <taxon>Pyrococcus</taxon>
    </lineage>
</organism>
<accession>P61878</accession>
<accession>P29050</accession>
<sequence length="732" mass="82255">MGRREEMIAKIKELMLQPERIRNIGIAAHIDHGKTTLSDNLLAGAGMISEELAGKQLVLDFDEQEQARGITINAANVSMVHNYEGKDYLINLIDTPGHVDFGGDVTRAMRAIDGVIIVVDAVEGVMPQTETVVRQALREYVKPVLFINKVDRLIRELKLTPQQMMERFSKIIMDVNRLIQRYAPEEYKKKWMVRVEDGSVAFGSAYYNWALSVPFMQRTGVKFNEIIDLTLKGDNKTLRQRAPLHVVVLDMVVRHLPSPIEAQKYRIPHLWQGDINSKIGQAMLNCDPKGKMVMVITKIIIDKHAGEVATGRVWSGTVRSGQEVYLINSKRKGRIQQVGIYMGPERINMEAVPAGNIVAVTGLRDAMAGETVAEEQIEPFEALHYVSEPVVTVAIEAKNVKDLPRLIEALRQLAKEDPTLHVKIDEETGQHLLSGMGELHLEVKLYKLQKDWGIEVDVSEPIVVYRESITKPSPIVEGKSPNKHNRFYVVVEPMPDEIYQAIKEGIIPEGRVKDPKAVAKKLAELGMDYDIARGVVDIYNGNMFLDNTKGIQYLNEVMDLLIDGFHQAMDEGPLAKEPVMKVIVRLVDAQVHEDNVHRGPAQIYPAIRTAIHCAMMKAGPVLYEPYQKVIINIPYEYMGAVSREISQRRGQLIDMRQEGEVMTIIAEAPVAEMFGFAGAIRSATSGRALWSTEHAGFKRVPNELAQQIIRQIRQRKGLDPNPPTEKDVCPLF</sequence>
<comment type="function">
    <text evidence="1">Catalyzes the GTP-dependent ribosomal translocation step during translation elongation. During this step, the ribosome changes from the pre-translocational (PRE) to the post-translocational (POST) state as the newly formed A-site-bound peptidyl-tRNA and P-site-bound deacylated tRNA move to the P and E sites, respectively. Catalyzes the coordinated movement of the two tRNA molecules, the mRNA and conformational changes in the ribosome (By similarity).</text>
</comment>
<comment type="subcellular location">
    <subcellularLocation>
        <location evidence="1">Cytoplasm</location>
    </subcellularLocation>
</comment>
<comment type="similarity">
    <text evidence="2">Belongs to the TRAFAC class translation factor GTPase superfamily. Classic translation factor GTPase family. EF-G/EF-2 subfamily.</text>
</comment>
<feature type="chain" id="PRO_0000091046" description="Elongation factor 2">
    <location>
        <begin position="1"/>
        <end position="732"/>
    </location>
</feature>
<feature type="domain" description="tr-type G">
    <location>
        <begin position="19"/>
        <end position="260"/>
    </location>
</feature>
<feature type="binding site" evidence="1">
    <location>
        <begin position="28"/>
        <end position="35"/>
    </location>
    <ligand>
        <name>GTP</name>
        <dbReference type="ChEBI" id="CHEBI:37565"/>
    </ligand>
</feature>
<feature type="binding site" evidence="1">
    <location>
        <begin position="94"/>
        <end position="98"/>
    </location>
    <ligand>
        <name>GTP</name>
        <dbReference type="ChEBI" id="CHEBI:37565"/>
    </ligand>
</feature>
<feature type="binding site" evidence="1">
    <location>
        <begin position="148"/>
        <end position="151"/>
    </location>
    <ligand>
        <name>GTP</name>
        <dbReference type="ChEBI" id="CHEBI:37565"/>
    </ligand>
</feature>
<feature type="modified residue" description="Diphthamide" evidence="1">
    <location>
        <position position="597"/>
    </location>
</feature>
<name>EF2_PYRWO</name>
<gene>
    <name type="primary">fusA</name>
    <name type="synonym">fus</name>
</gene>
<keyword id="KW-0963">Cytoplasm</keyword>
<keyword id="KW-0251">Elongation factor</keyword>
<keyword id="KW-0342">GTP-binding</keyword>
<keyword id="KW-0547">Nucleotide-binding</keyword>
<keyword id="KW-0648">Protein biosynthesis</keyword>
<reference key="1">
    <citation type="journal article" date="1994" name="Proc. Natl. Acad. Sci. U.S.A.">
        <title>Evolution of translational elongation factor (EF) sequences: reliability of global phylogenies inferred from EF-1 alpha(Tu) and EF-2(G) proteins.</title>
        <authorList>
            <person name="Creti R."/>
            <person name="Ceccarelli E."/>
            <person name="Bocchetta M."/>
            <person name="Sanangelantoni A.M."/>
            <person name="Tiboni O."/>
            <person name="Palm P."/>
            <person name="Cammarano P."/>
        </authorList>
    </citation>
    <scope>NUCLEOTIDE SEQUENCE [GENOMIC DNA]</scope>
</reference>
<dbReference type="EMBL" id="X67205">
    <property type="protein sequence ID" value="CAA47641.1"/>
    <property type="molecule type" value="Genomic_DNA"/>
</dbReference>
<dbReference type="PIR" id="S54741">
    <property type="entry name" value="S23864"/>
</dbReference>
<dbReference type="SMR" id="P61878"/>
<dbReference type="GO" id="GO:0005829">
    <property type="term" value="C:cytosol"/>
    <property type="evidence" value="ECO:0007669"/>
    <property type="project" value="TreeGrafter"/>
</dbReference>
<dbReference type="GO" id="GO:1990904">
    <property type="term" value="C:ribonucleoprotein complex"/>
    <property type="evidence" value="ECO:0007669"/>
    <property type="project" value="TreeGrafter"/>
</dbReference>
<dbReference type="GO" id="GO:0005525">
    <property type="term" value="F:GTP binding"/>
    <property type="evidence" value="ECO:0007669"/>
    <property type="project" value="UniProtKB-UniRule"/>
</dbReference>
<dbReference type="GO" id="GO:0003924">
    <property type="term" value="F:GTPase activity"/>
    <property type="evidence" value="ECO:0007669"/>
    <property type="project" value="InterPro"/>
</dbReference>
<dbReference type="GO" id="GO:0003746">
    <property type="term" value="F:translation elongation factor activity"/>
    <property type="evidence" value="ECO:0007669"/>
    <property type="project" value="UniProtKB-UniRule"/>
</dbReference>
<dbReference type="CDD" id="cd01681">
    <property type="entry name" value="aeEF2_snRNP_like_IV"/>
    <property type="match status" value="1"/>
</dbReference>
<dbReference type="CDD" id="cd01885">
    <property type="entry name" value="EF2"/>
    <property type="match status" value="1"/>
</dbReference>
<dbReference type="CDD" id="cd16268">
    <property type="entry name" value="EF2_II"/>
    <property type="match status" value="1"/>
</dbReference>
<dbReference type="CDD" id="cd16261">
    <property type="entry name" value="EF2_snRNP_III"/>
    <property type="match status" value="1"/>
</dbReference>
<dbReference type="CDD" id="cd01514">
    <property type="entry name" value="Elongation_Factor_C"/>
    <property type="match status" value="1"/>
</dbReference>
<dbReference type="FunFam" id="3.30.230.10:FF:000009">
    <property type="entry name" value="116 kDa U5 small nuclear ribonucleoprotein component"/>
    <property type="match status" value="1"/>
</dbReference>
<dbReference type="FunFam" id="2.40.30.10:FF:000110">
    <property type="entry name" value="Elongation factor 2"/>
    <property type="match status" value="1"/>
</dbReference>
<dbReference type="FunFam" id="3.30.70.240:FF:000010">
    <property type="entry name" value="Elongation factor 2"/>
    <property type="match status" value="1"/>
</dbReference>
<dbReference type="FunFam" id="3.40.50.300:FF:000684">
    <property type="entry name" value="Elongation factor 2"/>
    <property type="match status" value="1"/>
</dbReference>
<dbReference type="FunFam" id="3.30.70.870:FF:000002">
    <property type="entry name" value="Translation elongation factor 2"/>
    <property type="match status" value="1"/>
</dbReference>
<dbReference type="Gene3D" id="3.30.230.10">
    <property type="match status" value="1"/>
</dbReference>
<dbReference type="Gene3D" id="3.30.70.240">
    <property type="match status" value="1"/>
</dbReference>
<dbReference type="Gene3D" id="3.30.70.870">
    <property type="entry name" value="Elongation Factor G (Translational Gtpase), domain 3"/>
    <property type="match status" value="1"/>
</dbReference>
<dbReference type="Gene3D" id="3.40.50.300">
    <property type="entry name" value="P-loop containing nucleotide triphosphate hydrolases"/>
    <property type="match status" value="1"/>
</dbReference>
<dbReference type="Gene3D" id="2.40.30.10">
    <property type="entry name" value="Translation factors"/>
    <property type="match status" value="1"/>
</dbReference>
<dbReference type="HAMAP" id="MF_00054_A">
    <property type="entry name" value="EF_G_EF_2_A"/>
    <property type="match status" value="1"/>
</dbReference>
<dbReference type="InterPro" id="IPR041095">
    <property type="entry name" value="EFG_II"/>
</dbReference>
<dbReference type="InterPro" id="IPR035647">
    <property type="entry name" value="EFG_III/V"/>
</dbReference>
<dbReference type="InterPro" id="IPR000640">
    <property type="entry name" value="EFG_V-like"/>
</dbReference>
<dbReference type="InterPro" id="IPR004161">
    <property type="entry name" value="EFTu-like_2"/>
</dbReference>
<dbReference type="InterPro" id="IPR031157">
    <property type="entry name" value="G_TR_CS"/>
</dbReference>
<dbReference type="InterPro" id="IPR027417">
    <property type="entry name" value="P-loop_NTPase"/>
</dbReference>
<dbReference type="InterPro" id="IPR020568">
    <property type="entry name" value="Ribosomal_Su5_D2-typ_SF"/>
</dbReference>
<dbReference type="InterPro" id="IPR014721">
    <property type="entry name" value="Ribsml_uS5_D2-typ_fold_subgr"/>
</dbReference>
<dbReference type="InterPro" id="IPR005225">
    <property type="entry name" value="Small_GTP-bd"/>
</dbReference>
<dbReference type="InterPro" id="IPR000795">
    <property type="entry name" value="T_Tr_GTP-bd_dom"/>
</dbReference>
<dbReference type="InterPro" id="IPR009000">
    <property type="entry name" value="Transl_B-barrel_sf"/>
</dbReference>
<dbReference type="InterPro" id="IPR004543">
    <property type="entry name" value="Transl_elong_EFG/EF2_arc"/>
</dbReference>
<dbReference type="InterPro" id="IPR005517">
    <property type="entry name" value="Transl_elong_EFG/EF2_IV"/>
</dbReference>
<dbReference type="NCBIfam" id="TIGR00490">
    <property type="entry name" value="aEF-2"/>
    <property type="match status" value="1"/>
</dbReference>
<dbReference type="NCBIfam" id="TIGR00231">
    <property type="entry name" value="small_GTP"/>
    <property type="match status" value="1"/>
</dbReference>
<dbReference type="PANTHER" id="PTHR42908:SF3">
    <property type="entry name" value="ELONGATION FACTOR-LIKE GTPASE 1"/>
    <property type="match status" value="1"/>
</dbReference>
<dbReference type="PANTHER" id="PTHR42908">
    <property type="entry name" value="TRANSLATION ELONGATION FACTOR-RELATED"/>
    <property type="match status" value="1"/>
</dbReference>
<dbReference type="Pfam" id="PF00679">
    <property type="entry name" value="EFG_C"/>
    <property type="match status" value="1"/>
</dbReference>
<dbReference type="Pfam" id="PF14492">
    <property type="entry name" value="EFG_III"/>
    <property type="match status" value="1"/>
</dbReference>
<dbReference type="Pfam" id="PF03764">
    <property type="entry name" value="EFG_IV"/>
    <property type="match status" value="1"/>
</dbReference>
<dbReference type="Pfam" id="PF00009">
    <property type="entry name" value="GTP_EFTU"/>
    <property type="match status" value="1"/>
</dbReference>
<dbReference type="Pfam" id="PF03144">
    <property type="entry name" value="GTP_EFTU_D2"/>
    <property type="match status" value="1"/>
</dbReference>
<dbReference type="PRINTS" id="PR00315">
    <property type="entry name" value="ELONGATNFCT"/>
</dbReference>
<dbReference type="SMART" id="SM00838">
    <property type="entry name" value="EFG_C"/>
    <property type="match status" value="1"/>
</dbReference>
<dbReference type="SMART" id="SM00889">
    <property type="entry name" value="EFG_IV"/>
    <property type="match status" value="1"/>
</dbReference>
<dbReference type="SUPFAM" id="SSF54980">
    <property type="entry name" value="EF-G C-terminal domain-like"/>
    <property type="match status" value="2"/>
</dbReference>
<dbReference type="SUPFAM" id="SSF52540">
    <property type="entry name" value="P-loop containing nucleoside triphosphate hydrolases"/>
    <property type="match status" value="1"/>
</dbReference>
<dbReference type="SUPFAM" id="SSF54211">
    <property type="entry name" value="Ribosomal protein S5 domain 2-like"/>
    <property type="match status" value="1"/>
</dbReference>
<dbReference type="SUPFAM" id="SSF50447">
    <property type="entry name" value="Translation proteins"/>
    <property type="match status" value="1"/>
</dbReference>
<dbReference type="PROSITE" id="PS00301">
    <property type="entry name" value="G_TR_1"/>
    <property type="match status" value="1"/>
</dbReference>
<dbReference type="PROSITE" id="PS51722">
    <property type="entry name" value="G_TR_2"/>
    <property type="match status" value="1"/>
</dbReference>
<evidence type="ECO:0000250" key="1"/>
<evidence type="ECO:0000305" key="2"/>
<protein>
    <recommendedName>
        <fullName>Elongation factor 2</fullName>
        <shortName>EF-2</shortName>
    </recommendedName>
</protein>